<sequence>MTTHYIAGQWLAGQGEALQSLNPVTQAVVWTGQGADAGQVEAAVQAARQAFPGWASLSLEARIGVLEAFAGKLKARAEELAHCIGEETGKPLWESATEVTSMVNKVAISVQSYRERTGEKSGPLADATAVLRHKPHGVVAVFGPYNFPGHLPNGHIVPALLAGNCVVFKPSELTPKVAELTVQCWVEAGLPAGVLNLVQGARETGVALAANPGIDGLFFTGSSRTGNLLHQQFAGRPDKILALEMGGNNPLVVDEVKDLDAAVYTIIQSAFISAGQRCTCARRLLVPQGAWGDSLIQRLVDVSRSISVGAFDQQPAPFMGSVISLQAARALLAAQAELLGKGAVALLEMTQPQADAALLTPGIIDVTAVAGRPDEEFFGPLLQVIRYADFDAAIEEANNTQYGLAAGLLSDSNARYQHFWLRSRAGIVNWNKQLTGAASSAPFGGVGASGNHRASAYYAADYCAYPVASLETASLALPATLTPGVTL</sequence>
<feature type="chain" id="PRO_1000065760" description="N-succinylglutamate 5-semialdehyde dehydrogenase">
    <location>
        <begin position="1"/>
        <end position="487"/>
    </location>
</feature>
<feature type="active site" evidence="1">
    <location>
        <position position="244"/>
    </location>
</feature>
<feature type="active site" evidence="1">
    <location>
        <position position="278"/>
    </location>
</feature>
<feature type="binding site" evidence="1">
    <location>
        <begin position="221"/>
        <end position="226"/>
    </location>
    <ligand>
        <name>NAD(+)</name>
        <dbReference type="ChEBI" id="CHEBI:57540"/>
    </ligand>
</feature>
<proteinExistence type="inferred from homology"/>
<dbReference type="EC" id="1.2.1.71" evidence="1"/>
<dbReference type="EMBL" id="CT573326">
    <property type="protein sequence ID" value="CAK16587.1"/>
    <property type="molecule type" value="Genomic_DNA"/>
</dbReference>
<dbReference type="RefSeq" id="WP_011534962.1">
    <property type="nucleotide sequence ID" value="NC_008027.1"/>
</dbReference>
<dbReference type="SMR" id="Q1I6Z5"/>
<dbReference type="STRING" id="384676.PSEEN3879"/>
<dbReference type="GeneID" id="32806917"/>
<dbReference type="KEGG" id="pen:PSEEN3879"/>
<dbReference type="eggNOG" id="COG1012">
    <property type="taxonomic scope" value="Bacteria"/>
</dbReference>
<dbReference type="HOGENOM" id="CLU_005391_1_0_6"/>
<dbReference type="OrthoDB" id="9812625at2"/>
<dbReference type="UniPathway" id="UPA00185">
    <property type="reaction ID" value="UER00282"/>
</dbReference>
<dbReference type="Proteomes" id="UP000000658">
    <property type="component" value="Chromosome"/>
</dbReference>
<dbReference type="GO" id="GO:0043824">
    <property type="term" value="F:succinylglutamate-semialdehyde dehydrogenase activity"/>
    <property type="evidence" value="ECO:0007669"/>
    <property type="project" value="UniProtKB-EC"/>
</dbReference>
<dbReference type="GO" id="GO:0019544">
    <property type="term" value="P:arginine catabolic process to glutamate"/>
    <property type="evidence" value="ECO:0007669"/>
    <property type="project" value="UniProtKB-UniRule"/>
</dbReference>
<dbReference type="GO" id="GO:0019545">
    <property type="term" value="P:arginine catabolic process to succinate"/>
    <property type="evidence" value="ECO:0007669"/>
    <property type="project" value="UniProtKB-UniRule"/>
</dbReference>
<dbReference type="CDD" id="cd07095">
    <property type="entry name" value="ALDH_SGSD_AstD"/>
    <property type="match status" value="1"/>
</dbReference>
<dbReference type="FunFam" id="3.40.309.10:FF:000013">
    <property type="entry name" value="N-succinylglutamate 5-semialdehyde dehydrogenase"/>
    <property type="match status" value="1"/>
</dbReference>
<dbReference type="FunFam" id="3.40.605.10:FF:000010">
    <property type="entry name" value="N-succinylglutamate 5-semialdehyde dehydrogenase"/>
    <property type="match status" value="1"/>
</dbReference>
<dbReference type="Gene3D" id="3.40.605.10">
    <property type="entry name" value="Aldehyde Dehydrogenase, Chain A, domain 1"/>
    <property type="match status" value="1"/>
</dbReference>
<dbReference type="Gene3D" id="3.40.309.10">
    <property type="entry name" value="Aldehyde Dehydrogenase, Chain A, domain 2"/>
    <property type="match status" value="1"/>
</dbReference>
<dbReference type="HAMAP" id="MF_01174">
    <property type="entry name" value="Aldedh_AstD"/>
    <property type="match status" value="1"/>
</dbReference>
<dbReference type="InterPro" id="IPR016161">
    <property type="entry name" value="Ald_DH/histidinol_DH"/>
</dbReference>
<dbReference type="InterPro" id="IPR016163">
    <property type="entry name" value="Ald_DH_C"/>
</dbReference>
<dbReference type="InterPro" id="IPR016160">
    <property type="entry name" value="Ald_DH_CS_CYS"/>
</dbReference>
<dbReference type="InterPro" id="IPR029510">
    <property type="entry name" value="Ald_DH_CS_GLU"/>
</dbReference>
<dbReference type="InterPro" id="IPR016162">
    <property type="entry name" value="Ald_DH_N"/>
</dbReference>
<dbReference type="InterPro" id="IPR015590">
    <property type="entry name" value="Aldehyde_DH_dom"/>
</dbReference>
<dbReference type="InterPro" id="IPR017649">
    <property type="entry name" value="SuccinylGlu_semiald_DH_AstD"/>
</dbReference>
<dbReference type="NCBIfam" id="TIGR03240">
    <property type="entry name" value="arg_catab_astD"/>
    <property type="match status" value="1"/>
</dbReference>
<dbReference type="NCBIfam" id="NF006992">
    <property type="entry name" value="PRK09457.1"/>
    <property type="match status" value="1"/>
</dbReference>
<dbReference type="PANTHER" id="PTHR11699">
    <property type="entry name" value="ALDEHYDE DEHYDROGENASE-RELATED"/>
    <property type="match status" value="1"/>
</dbReference>
<dbReference type="Pfam" id="PF00171">
    <property type="entry name" value="Aldedh"/>
    <property type="match status" value="1"/>
</dbReference>
<dbReference type="SUPFAM" id="SSF53720">
    <property type="entry name" value="ALDH-like"/>
    <property type="match status" value="1"/>
</dbReference>
<dbReference type="PROSITE" id="PS00070">
    <property type="entry name" value="ALDEHYDE_DEHYDR_CYS"/>
    <property type="match status" value="1"/>
</dbReference>
<dbReference type="PROSITE" id="PS00687">
    <property type="entry name" value="ALDEHYDE_DEHYDR_GLU"/>
    <property type="match status" value="1"/>
</dbReference>
<name>ASTD_PSEE4</name>
<evidence type="ECO:0000255" key="1">
    <source>
        <dbReference type="HAMAP-Rule" id="MF_01174"/>
    </source>
</evidence>
<keyword id="KW-0056">Arginine metabolism</keyword>
<keyword id="KW-0520">NAD</keyword>
<keyword id="KW-0560">Oxidoreductase</keyword>
<organism>
    <name type="scientific">Pseudomonas entomophila (strain L48)</name>
    <dbReference type="NCBI Taxonomy" id="384676"/>
    <lineage>
        <taxon>Bacteria</taxon>
        <taxon>Pseudomonadati</taxon>
        <taxon>Pseudomonadota</taxon>
        <taxon>Gammaproteobacteria</taxon>
        <taxon>Pseudomonadales</taxon>
        <taxon>Pseudomonadaceae</taxon>
        <taxon>Pseudomonas</taxon>
    </lineage>
</organism>
<accession>Q1I6Z5</accession>
<reference key="1">
    <citation type="journal article" date="2006" name="Nat. Biotechnol.">
        <title>Complete genome sequence of the entomopathogenic and metabolically versatile soil bacterium Pseudomonas entomophila.</title>
        <authorList>
            <person name="Vodovar N."/>
            <person name="Vallenet D."/>
            <person name="Cruveiller S."/>
            <person name="Rouy Z."/>
            <person name="Barbe V."/>
            <person name="Acosta C."/>
            <person name="Cattolico L."/>
            <person name="Jubin C."/>
            <person name="Lajus A."/>
            <person name="Segurens B."/>
            <person name="Vacherie B."/>
            <person name="Wincker P."/>
            <person name="Weissenbach J."/>
            <person name="Lemaitre B."/>
            <person name="Medigue C."/>
            <person name="Boccard F."/>
        </authorList>
    </citation>
    <scope>NUCLEOTIDE SEQUENCE [LARGE SCALE GENOMIC DNA]</scope>
    <source>
        <strain>L48</strain>
    </source>
</reference>
<gene>
    <name evidence="1" type="primary">astD</name>
    <name type="ordered locus">PSEEN3879</name>
</gene>
<comment type="function">
    <text evidence="1">Catalyzes the NAD-dependent reduction of succinylglutamate semialdehyde into succinylglutamate.</text>
</comment>
<comment type="catalytic activity">
    <reaction evidence="1">
        <text>N-succinyl-L-glutamate 5-semialdehyde + NAD(+) + H2O = N-succinyl-L-glutamate + NADH + 2 H(+)</text>
        <dbReference type="Rhea" id="RHEA:10812"/>
        <dbReference type="ChEBI" id="CHEBI:15377"/>
        <dbReference type="ChEBI" id="CHEBI:15378"/>
        <dbReference type="ChEBI" id="CHEBI:57540"/>
        <dbReference type="ChEBI" id="CHEBI:57945"/>
        <dbReference type="ChEBI" id="CHEBI:58520"/>
        <dbReference type="ChEBI" id="CHEBI:58763"/>
        <dbReference type="EC" id="1.2.1.71"/>
    </reaction>
</comment>
<comment type="pathway">
    <text evidence="1">Amino-acid degradation; L-arginine degradation via AST pathway; L-glutamate and succinate from L-arginine: step 4/5.</text>
</comment>
<comment type="similarity">
    <text evidence="1">Belongs to the aldehyde dehydrogenase family. AstD subfamily.</text>
</comment>
<protein>
    <recommendedName>
        <fullName evidence="1">N-succinylglutamate 5-semialdehyde dehydrogenase</fullName>
        <ecNumber evidence="1">1.2.1.71</ecNumber>
    </recommendedName>
    <alternativeName>
        <fullName evidence="1">Succinylglutamic semialdehyde dehydrogenase</fullName>
        <shortName evidence="1">SGSD</shortName>
    </alternativeName>
</protein>